<comment type="subcellular location">
    <subcellularLocation>
        <location evidence="2">Cytoplasm</location>
    </subcellularLocation>
    <subcellularLocation>
        <location evidence="3">Membrane</location>
        <topology evidence="3">Multi-pass membrane protein</topology>
    </subcellularLocation>
</comment>
<comment type="similarity">
    <text evidence="3">Belongs to the EMC3 family.</text>
</comment>
<keyword id="KW-0963">Cytoplasm</keyword>
<keyword id="KW-0472">Membrane</keyword>
<keyword id="KW-1185">Reference proteome</keyword>
<keyword id="KW-0812">Transmembrane</keyword>
<keyword id="KW-1133">Transmembrane helix</keyword>
<proteinExistence type="inferred from homology"/>
<evidence type="ECO:0000255" key="1"/>
<evidence type="ECO:0000269" key="2">
    <source>
    </source>
</evidence>
<evidence type="ECO:0000305" key="3"/>
<gene>
    <name type="ORF">SPBC1711.03</name>
</gene>
<reference key="1">
    <citation type="journal article" date="2002" name="Nature">
        <title>The genome sequence of Schizosaccharomyces pombe.</title>
        <authorList>
            <person name="Wood V."/>
            <person name="Gwilliam R."/>
            <person name="Rajandream M.A."/>
            <person name="Lyne M.H."/>
            <person name="Lyne R."/>
            <person name="Stewart A."/>
            <person name="Sgouros J.G."/>
            <person name="Peat N."/>
            <person name="Hayles J."/>
            <person name="Baker S.G."/>
            <person name="Basham D."/>
            <person name="Bowman S."/>
            <person name="Brooks K."/>
            <person name="Brown D."/>
            <person name="Brown S."/>
            <person name="Chillingworth T."/>
            <person name="Churcher C.M."/>
            <person name="Collins M."/>
            <person name="Connor R."/>
            <person name="Cronin A."/>
            <person name="Davis P."/>
            <person name="Feltwell T."/>
            <person name="Fraser A."/>
            <person name="Gentles S."/>
            <person name="Goble A."/>
            <person name="Hamlin N."/>
            <person name="Harris D.E."/>
            <person name="Hidalgo J."/>
            <person name="Hodgson G."/>
            <person name="Holroyd S."/>
            <person name="Hornsby T."/>
            <person name="Howarth S."/>
            <person name="Huckle E.J."/>
            <person name="Hunt S."/>
            <person name="Jagels K."/>
            <person name="James K.D."/>
            <person name="Jones L."/>
            <person name="Jones M."/>
            <person name="Leather S."/>
            <person name="McDonald S."/>
            <person name="McLean J."/>
            <person name="Mooney P."/>
            <person name="Moule S."/>
            <person name="Mungall K.L."/>
            <person name="Murphy L.D."/>
            <person name="Niblett D."/>
            <person name="Odell C."/>
            <person name="Oliver K."/>
            <person name="O'Neil S."/>
            <person name="Pearson D."/>
            <person name="Quail M.A."/>
            <person name="Rabbinowitsch E."/>
            <person name="Rutherford K.M."/>
            <person name="Rutter S."/>
            <person name="Saunders D."/>
            <person name="Seeger K."/>
            <person name="Sharp S."/>
            <person name="Skelton J."/>
            <person name="Simmonds M.N."/>
            <person name="Squares R."/>
            <person name="Squares S."/>
            <person name="Stevens K."/>
            <person name="Taylor K."/>
            <person name="Taylor R.G."/>
            <person name="Tivey A."/>
            <person name="Walsh S.V."/>
            <person name="Warren T."/>
            <person name="Whitehead S."/>
            <person name="Woodward J.R."/>
            <person name="Volckaert G."/>
            <person name="Aert R."/>
            <person name="Robben J."/>
            <person name="Grymonprez B."/>
            <person name="Weltjens I."/>
            <person name="Vanstreels E."/>
            <person name="Rieger M."/>
            <person name="Schaefer M."/>
            <person name="Mueller-Auer S."/>
            <person name="Gabel C."/>
            <person name="Fuchs M."/>
            <person name="Duesterhoeft A."/>
            <person name="Fritzc C."/>
            <person name="Holzer E."/>
            <person name="Moestl D."/>
            <person name="Hilbert H."/>
            <person name="Borzym K."/>
            <person name="Langer I."/>
            <person name="Beck A."/>
            <person name="Lehrach H."/>
            <person name="Reinhardt R."/>
            <person name="Pohl T.M."/>
            <person name="Eger P."/>
            <person name="Zimmermann W."/>
            <person name="Wedler H."/>
            <person name="Wambutt R."/>
            <person name="Purnelle B."/>
            <person name="Goffeau A."/>
            <person name="Cadieu E."/>
            <person name="Dreano S."/>
            <person name="Gloux S."/>
            <person name="Lelaure V."/>
            <person name="Mottier S."/>
            <person name="Galibert F."/>
            <person name="Aves S.J."/>
            <person name="Xiang Z."/>
            <person name="Hunt C."/>
            <person name="Moore K."/>
            <person name="Hurst S.M."/>
            <person name="Lucas M."/>
            <person name="Rochet M."/>
            <person name="Gaillardin C."/>
            <person name="Tallada V.A."/>
            <person name="Garzon A."/>
            <person name="Thode G."/>
            <person name="Daga R.R."/>
            <person name="Cruzado L."/>
            <person name="Jimenez J."/>
            <person name="Sanchez M."/>
            <person name="del Rey F."/>
            <person name="Benito J."/>
            <person name="Dominguez A."/>
            <person name="Revuelta J.L."/>
            <person name="Moreno S."/>
            <person name="Armstrong J."/>
            <person name="Forsburg S.L."/>
            <person name="Cerutti L."/>
            <person name="Lowe T."/>
            <person name="McCombie W.R."/>
            <person name="Paulsen I."/>
            <person name="Potashkin J."/>
            <person name="Shpakovski G.V."/>
            <person name="Ussery D."/>
            <person name="Barrell B.G."/>
            <person name="Nurse P."/>
        </authorList>
    </citation>
    <scope>NUCLEOTIDE SEQUENCE [LARGE SCALE GENOMIC DNA]</scope>
    <source>
        <strain>972 / ATCC 24843</strain>
    </source>
</reference>
<reference key="2">
    <citation type="journal article" date="2006" name="Nat. Biotechnol.">
        <title>ORFeome cloning and global analysis of protein localization in the fission yeast Schizosaccharomyces pombe.</title>
        <authorList>
            <person name="Matsuyama A."/>
            <person name="Arai R."/>
            <person name="Yashiroda Y."/>
            <person name="Shirai A."/>
            <person name="Kamata A."/>
            <person name="Sekido S."/>
            <person name="Kobayashi Y."/>
            <person name="Hashimoto A."/>
            <person name="Hamamoto M."/>
            <person name="Hiraoka Y."/>
            <person name="Horinouchi S."/>
            <person name="Yoshida M."/>
        </authorList>
    </citation>
    <scope>SUBCELLULAR LOCATION [LARGE SCALE ANALYSIS]</scope>
</reference>
<organism>
    <name type="scientific">Schizosaccharomyces pombe (strain 972 / ATCC 24843)</name>
    <name type="common">Fission yeast</name>
    <dbReference type="NCBI Taxonomy" id="284812"/>
    <lineage>
        <taxon>Eukaryota</taxon>
        <taxon>Fungi</taxon>
        <taxon>Dikarya</taxon>
        <taxon>Ascomycota</taxon>
        <taxon>Taphrinomycotina</taxon>
        <taxon>Schizosaccharomycetes</taxon>
        <taxon>Schizosaccharomycetales</taxon>
        <taxon>Schizosaccharomycetaceae</taxon>
        <taxon>Schizosaccharomyces</taxon>
    </lineage>
</organism>
<dbReference type="EMBL" id="CU329671">
    <property type="protein sequence ID" value="CAB88233.1"/>
    <property type="molecule type" value="Genomic_DNA"/>
</dbReference>
<dbReference type="SMR" id="Q9P787"/>
<dbReference type="BioGRID" id="276291">
    <property type="interactions" value="5"/>
</dbReference>
<dbReference type="FunCoup" id="Q9P787">
    <property type="interactions" value="251"/>
</dbReference>
<dbReference type="STRING" id="284812.Q9P787"/>
<dbReference type="PaxDb" id="4896-SPBC1711.03.1"/>
<dbReference type="EnsemblFungi" id="SPBC1711.03.1">
    <property type="protein sequence ID" value="SPBC1711.03.1:pep"/>
    <property type="gene ID" value="SPBC1711.03"/>
</dbReference>
<dbReference type="KEGG" id="spo:2539739"/>
<dbReference type="PomBase" id="SPBC1711.03"/>
<dbReference type="VEuPathDB" id="FungiDB:SPBC1711.03"/>
<dbReference type="eggNOG" id="KOG3188">
    <property type="taxonomic scope" value="Eukaryota"/>
</dbReference>
<dbReference type="HOGENOM" id="CLU_060791_0_0_1"/>
<dbReference type="InParanoid" id="Q9P787"/>
<dbReference type="OMA" id="KDMDPRW"/>
<dbReference type="PhylomeDB" id="Q9P787"/>
<dbReference type="PRO" id="PR:Q9P787"/>
<dbReference type="Proteomes" id="UP000002485">
    <property type="component" value="Chromosome II"/>
</dbReference>
<dbReference type="GO" id="GO:0005829">
    <property type="term" value="C:cytosol"/>
    <property type="evidence" value="ECO:0007005"/>
    <property type="project" value="PomBase"/>
</dbReference>
<dbReference type="GO" id="GO:0072546">
    <property type="term" value="C:EMC complex"/>
    <property type="evidence" value="ECO:0000318"/>
    <property type="project" value="GO_Central"/>
</dbReference>
<dbReference type="GO" id="GO:0045048">
    <property type="term" value="P:protein insertion into ER membrane"/>
    <property type="evidence" value="ECO:0000305"/>
    <property type="project" value="PomBase"/>
</dbReference>
<dbReference type="InterPro" id="IPR008568">
    <property type="entry name" value="EMC3"/>
</dbReference>
<dbReference type="InterPro" id="IPR002809">
    <property type="entry name" value="EMC3/TMCO1"/>
</dbReference>
<dbReference type="PANTHER" id="PTHR13116">
    <property type="entry name" value="ER MEMBRANE PROTEIN COMPLEX SUBUNIT 3"/>
    <property type="match status" value="1"/>
</dbReference>
<dbReference type="PANTHER" id="PTHR13116:SF5">
    <property type="entry name" value="ER MEMBRANE PROTEIN COMPLEX SUBUNIT 3"/>
    <property type="match status" value="1"/>
</dbReference>
<dbReference type="Pfam" id="PF01956">
    <property type="entry name" value="EMC3_TMCO1"/>
    <property type="match status" value="1"/>
</dbReference>
<dbReference type="PIRSF" id="PIRSF010045">
    <property type="entry name" value="DUF850_TM_euk"/>
    <property type="match status" value="1"/>
</dbReference>
<dbReference type="SMART" id="SM01415">
    <property type="entry name" value="DUF106"/>
    <property type="match status" value="1"/>
</dbReference>
<name>YNY3_SCHPO</name>
<protein>
    <recommendedName>
        <fullName>ER membrane protein complex subunit 3</fullName>
    </recommendedName>
</protein>
<sequence length="258" mass="28883">MQKLLLDPALRNWVLLPIMFVMILIGILRHNATILLQSSPKKLSKEEIREQRLLQRAYALRACSNSLLPESIEARKCFLIESLKSGKYLKPVDPNAPKAANPLMDDKTLEGLMESMKGNMLMVVPQTIIMTWINEFFSGFILLKLPFPLTLRFKSIFQSGVATQDLDVQWVSSISWYFLNLFGLKSVYALLLGENNAASNATNEMGMAGFSSAAATAQLIQPGQDISKMMLSEAENVQILKNESLLVDVEKRLLAQFA</sequence>
<accession>Q9P787</accession>
<feature type="chain" id="PRO_0000340103" description="ER membrane protein complex subunit 3">
    <location>
        <begin position="1"/>
        <end position="258"/>
    </location>
</feature>
<feature type="transmembrane region" description="Helical" evidence="1">
    <location>
        <begin position="8"/>
        <end position="28"/>
    </location>
</feature>
<feature type="transmembrane region" description="Helical" evidence="1">
    <location>
        <begin position="123"/>
        <end position="143"/>
    </location>
</feature>
<feature type="transmembrane region" description="Helical" evidence="1">
    <location>
        <begin position="173"/>
        <end position="193"/>
    </location>
</feature>